<proteinExistence type="inferred from homology"/>
<protein>
    <recommendedName>
        <fullName evidence="1">UDP-N-acetylenolpyruvoylglucosamine reductase 1</fullName>
        <ecNumber evidence="1">1.3.1.98</ecNumber>
    </recommendedName>
    <alternativeName>
        <fullName evidence="1">UDP-N-acetylmuramate dehydrogenase 1</fullName>
    </alternativeName>
</protein>
<keyword id="KW-0131">Cell cycle</keyword>
<keyword id="KW-0132">Cell division</keyword>
<keyword id="KW-0133">Cell shape</keyword>
<keyword id="KW-0961">Cell wall biogenesis/degradation</keyword>
<keyword id="KW-0963">Cytoplasm</keyword>
<keyword id="KW-0274">FAD</keyword>
<keyword id="KW-0285">Flavoprotein</keyword>
<keyword id="KW-0521">NADP</keyword>
<keyword id="KW-0560">Oxidoreductase</keyword>
<keyword id="KW-0573">Peptidoglycan synthesis</keyword>
<comment type="function">
    <text evidence="1">Cell wall formation.</text>
</comment>
<comment type="catalytic activity">
    <reaction evidence="1">
        <text>UDP-N-acetyl-alpha-D-muramate + NADP(+) = UDP-N-acetyl-3-O-(1-carboxyvinyl)-alpha-D-glucosamine + NADPH + H(+)</text>
        <dbReference type="Rhea" id="RHEA:12248"/>
        <dbReference type="ChEBI" id="CHEBI:15378"/>
        <dbReference type="ChEBI" id="CHEBI:57783"/>
        <dbReference type="ChEBI" id="CHEBI:58349"/>
        <dbReference type="ChEBI" id="CHEBI:68483"/>
        <dbReference type="ChEBI" id="CHEBI:70757"/>
        <dbReference type="EC" id="1.3.1.98"/>
    </reaction>
</comment>
<comment type="cofactor">
    <cofactor evidence="1">
        <name>FAD</name>
        <dbReference type="ChEBI" id="CHEBI:57692"/>
    </cofactor>
</comment>
<comment type="pathway">
    <text evidence="1">Cell wall biogenesis; peptidoglycan biosynthesis.</text>
</comment>
<comment type="subcellular location">
    <subcellularLocation>
        <location evidence="1">Cytoplasm</location>
    </subcellularLocation>
</comment>
<comment type="similarity">
    <text evidence="1">Belongs to the MurB family.</text>
</comment>
<organism>
    <name type="scientific">Bacillus cereus (strain ZK / E33L)</name>
    <dbReference type="NCBI Taxonomy" id="288681"/>
    <lineage>
        <taxon>Bacteria</taxon>
        <taxon>Bacillati</taxon>
        <taxon>Bacillota</taxon>
        <taxon>Bacilli</taxon>
        <taxon>Bacillales</taxon>
        <taxon>Bacillaceae</taxon>
        <taxon>Bacillus</taxon>
        <taxon>Bacillus cereus group</taxon>
    </lineage>
</organism>
<accession>Q636B7</accession>
<reference key="1">
    <citation type="journal article" date="2006" name="J. Bacteriol.">
        <title>Pathogenomic sequence analysis of Bacillus cereus and Bacillus thuringiensis isolates closely related to Bacillus anthracis.</title>
        <authorList>
            <person name="Han C.S."/>
            <person name="Xie G."/>
            <person name="Challacombe J.F."/>
            <person name="Altherr M.R."/>
            <person name="Bhotika S.S."/>
            <person name="Bruce D."/>
            <person name="Campbell C.S."/>
            <person name="Campbell M.L."/>
            <person name="Chen J."/>
            <person name="Chertkov O."/>
            <person name="Cleland C."/>
            <person name="Dimitrijevic M."/>
            <person name="Doggett N.A."/>
            <person name="Fawcett J.J."/>
            <person name="Glavina T."/>
            <person name="Goodwin L.A."/>
            <person name="Hill K.K."/>
            <person name="Hitchcock P."/>
            <person name="Jackson P.J."/>
            <person name="Keim P."/>
            <person name="Kewalramani A.R."/>
            <person name="Longmire J."/>
            <person name="Lucas S."/>
            <person name="Malfatti S."/>
            <person name="McMurry K."/>
            <person name="Meincke L.J."/>
            <person name="Misra M."/>
            <person name="Moseman B.L."/>
            <person name="Mundt M."/>
            <person name="Munk A.C."/>
            <person name="Okinaka R.T."/>
            <person name="Parson-Quintana B."/>
            <person name="Reilly L.P."/>
            <person name="Richardson P."/>
            <person name="Robinson D.L."/>
            <person name="Rubin E."/>
            <person name="Saunders E."/>
            <person name="Tapia R."/>
            <person name="Tesmer J.G."/>
            <person name="Thayer N."/>
            <person name="Thompson L.S."/>
            <person name="Tice H."/>
            <person name="Ticknor L.O."/>
            <person name="Wills P.L."/>
            <person name="Brettin T.S."/>
            <person name="Gilna P."/>
        </authorList>
    </citation>
    <scope>NUCLEOTIDE SEQUENCE [LARGE SCALE GENOMIC DNA]</scope>
    <source>
        <strain>ZK / E33L</strain>
    </source>
</reference>
<gene>
    <name evidence="1" type="primary">murB1</name>
    <name type="ordered locus">BCE33L3668</name>
</gene>
<sequence>MEQLVNELIEANVGRVLVDEPLARYTTMKIGGPADILIVPKHVAGIEKTLQLVKKYKTKWTVIGRGSNLLVSDLGIEGVVIRLGEGLEHLEVEKHRVRVGGGYPLIKLSTLLSRQGLAGLEFASGIPGSVGGAVYMNAGAHKSDISNILSKALILFEDGTIDWLTHGEMEFSYRTSVLQTKRPGIVLEAEFQLQIGERERIVSVMQKNKDYRRETQPWNHPCAGSVFRNPTPYFAGDLIEKAGLRGYQIGGAQISEMHGNFIINTGGASAQDVLSLIALIKQTIKDKFGVAMHTEVEIIGR</sequence>
<feature type="chain" id="PRO_0000224656" description="UDP-N-acetylenolpyruvoylglucosamine reductase 1">
    <location>
        <begin position="1"/>
        <end position="301"/>
    </location>
</feature>
<feature type="domain" description="FAD-binding PCMH-type" evidence="1">
    <location>
        <begin position="29"/>
        <end position="196"/>
    </location>
</feature>
<feature type="active site" evidence="1">
    <location>
        <position position="174"/>
    </location>
</feature>
<feature type="active site" description="Proton donor" evidence="1">
    <location>
        <position position="225"/>
    </location>
</feature>
<feature type="active site" evidence="1">
    <location>
        <position position="295"/>
    </location>
</feature>
<dbReference type="EC" id="1.3.1.98" evidence="1"/>
<dbReference type="EMBL" id="CP000001">
    <property type="protein sequence ID" value="AAU16598.1"/>
    <property type="molecule type" value="Genomic_DNA"/>
</dbReference>
<dbReference type="RefSeq" id="WP_000437044.1">
    <property type="nucleotide sequence ID" value="NC_006274.1"/>
</dbReference>
<dbReference type="SMR" id="Q636B7"/>
<dbReference type="KEGG" id="bcz:BCE33L3668"/>
<dbReference type="PATRIC" id="fig|288681.22.peg.1743"/>
<dbReference type="UniPathway" id="UPA00219"/>
<dbReference type="Proteomes" id="UP000002612">
    <property type="component" value="Chromosome"/>
</dbReference>
<dbReference type="GO" id="GO:0005829">
    <property type="term" value="C:cytosol"/>
    <property type="evidence" value="ECO:0007669"/>
    <property type="project" value="TreeGrafter"/>
</dbReference>
<dbReference type="GO" id="GO:0071949">
    <property type="term" value="F:FAD binding"/>
    <property type="evidence" value="ECO:0007669"/>
    <property type="project" value="InterPro"/>
</dbReference>
<dbReference type="GO" id="GO:0008762">
    <property type="term" value="F:UDP-N-acetylmuramate dehydrogenase activity"/>
    <property type="evidence" value="ECO:0007669"/>
    <property type="project" value="UniProtKB-UniRule"/>
</dbReference>
<dbReference type="GO" id="GO:0051301">
    <property type="term" value="P:cell division"/>
    <property type="evidence" value="ECO:0007669"/>
    <property type="project" value="UniProtKB-KW"/>
</dbReference>
<dbReference type="GO" id="GO:0071555">
    <property type="term" value="P:cell wall organization"/>
    <property type="evidence" value="ECO:0007669"/>
    <property type="project" value="UniProtKB-KW"/>
</dbReference>
<dbReference type="GO" id="GO:0009252">
    <property type="term" value="P:peptidoglycan biosynthetic process"/>
    <property type="evidence" value="ECO:0007669"/>
    <property type="project" value="UniProtKB-UniRule"/>
</dbReference>
<dbReference type="GO" id="GO:0008360">
    <property type="term" value="P:regulation of cell shape"/>
    <property type="evidence" value="ECO:0007669"/>
    <property type="project" value="UniProtKB-KW"/>
</dbReference>
<dbReference type="Gene3D" id="3.30.465.10">
    <property type="match status" value="1"/>
</dbReference>
<dbReference type="Gene3D" id="3.90.78.10">
    <property type="entry name" value="UDP-N-acetylenolpyruvoylglucosamine reductase, C-terminal domain"/>
    <property type="match status" value="1"/>
</dbReference>
<dbReference type="Gene3D" id="3.30.43.10">
    <property type="entry name" value="Uridine Diphospho-n-acetylenolpyruvylglucosamine Reductase, domain 2"/>
    <property type="match status" value="1"/>
</dbReference>
<dbReference type="HAMAP" id="MF_00037">
    <property type="entry name" value="MurB"/>
    <property type="match status" value="1"/>
</dbReference>
<dbReference type="InterPro" id="IPR016166">
    <property type="entry name" value="FAD-bd_PCMH"/>
</dbReference>
<dbReference type="InterPro" id="IPR036318">
    <property type="entry name" value="FAD-bd_PCMH-like_sf"/>
</dbReference>
<dbReference type="InterPro" id="IPR016167">
    <property type="entry name" value="FAD-bd_PCMH_sub1"/>
</dbReference>
<dbReference type="InterPro" id="IPR016169">
    <property type="entry name" value="FAD-bd_PCMH_sub2"/>
</dbReference>
<dbReference type="InterPro" id="IPR003170">
    <property type="entry name" value="MurB"/>
</dbReference>
<dbReference type="InterPro" id="IPR011601">
    <property type="entry name" value="MurB_C"/>
</dbReference>
<dbReference type="InterPro" id="IPR036635">
    <property type="entry name" value="MurB_C_sf"/>
</dbReference>
<dbReference type="InterPro" id="IPR006094">
    <property type="entry name" value="Oxid_FAD_bind_N"/>
</dbReference>
<dbReference type="NCBIfam" id="TIGR00179">
    <property type="entry name" value="murB"/>
    <property type="match status" value="1"/>
</dbReference>
<dbReference type="NCBIfam" id="NF010480">
    <property type="entry name" value="PRK13905.1"/>
    <property type="match status" value="1"/>
</dbReference>
<dbReference type="PANTHER" id="PTHR21071">
    <property type="entry name" value="UDP-N-ACETYLENOLPYRUVOYLGLUCOSAMINE REDUCTASE"/>
    <property type="match status" value="1"/>
</dbReference>
<dbReference type="PANTHER" id="PTHR21071:SF5">
    <property type="entry name" value="UDP-N-ACETYLENOLPYRUVOYLGLUCOSAMINE REDUCTASE"/>
    <property type="match status" value="1"/>
</dbReference>
<dbReference type="Pfam" id="PF01565">
    <property type="entry name" value="FAD_binding_4"/>
    <property type="match status" value="1"/>
</dbReference>
<dbReference type="Pfam" id="PF02873">
    <property type="entry name" value="MurB_C"/>
    <property type="match status" value="1"/>
</dbReference>
<dbReference type="SUPFAM" id="SSF56176">
    <property type="entry name" value="FAD-binding/transporter-associated domain-like"/>
    <property type="match status" value="1"/>
</dbReference>
<dbReference type="SUPFAM" id="SSF56194">
    <property type="entry name" value="Uridine diphospho-N-Acetylenolpyruvylglucosamine reductase, MurB, C-terminal domain"/>
    <property type="match status" value="1"/>
</dbReference>
<dbReference type="PROSITE" id="PS51387">
    <property type="entry name" value="FAD_PCMH"/>
    <property type="match status" value="1"/>
</dbReference>
<name>MURB1_BACCZ</name>
<evidence type="ECO:0000255" key="1">
    <source>
        <dbReference type="HAMAP-Rule" id="MF_00037"/>
    </source>
</evidence>